<reference key="1">
    <citation type="submission" date="2007-11" db="EMBL/GenBank/DDBJ databases">
        <title>Complete sequence of Delftia acidovorans DSM 14801 / SPH-1.</title>
        <authorList>
            <person name="Copeland A."/>
            <person name="Lucas S."/>
            <person name="Lapidus A."/>
            <person name="Barry K."/>
            <person name="Glavina del Rio T."/>
            <person name="Dalin E."/>
            <person name="Tice H."/>
            <person name="Pitluck S."/>
            <person name="Lowry S."/>
            <person name="Clum A."/>
            <person name="Schmutz J."/>
            <person name="Larimer F."/>
            <person name="Land M."/>
            <person name="Hauser L."/>
            <person name="Kyrpides N."/>
            <person name="Kim E."/>
            <person name="Schleheck D."/>
            <person name="Richardson P."/>
        </authorList>
    </citation>
    <scope>NUCLEOTIDE SEQUENCE [LARGE SCALE GENOMIC DNA]</scope>
    <source>
        <strain>DSM 14801 / SPH-1</strain>
    </source>
</reference>
<dbReference type="EC" id="1.1.1.86" evidence="1"/>
<dbReference type="EMBL" id="CP000884">
    <property type="protein sequence ID" value="ABX37494.1"/>
    <property type="molecule type" value="Genomic_DNA"/>
</dbReference>
<dbReference type="RefSeq" id="WP_012206664.1">
    <property type="nucleotide sequence ID" value="NC_010002.1"/>
</dbReference>
<dbReference type="SMR" id="A9BME9"/>
<dbReference type="STRING" id="398578.Daci_4865"/>
<dbReference type="GeneID" id="24117045"/>
<dbReference type="KEGG" id="dac:Daci_4865"/>
<dbReference type="eggNOG" id="COG0059">
    <property type="taxonomic scope" value="Bacteria"/>
</dbReference>
<dbReference type="HOGENOM" id="CLU_033821_0_1_4"/>
<dbReference type="UniPathway" id="UPA00047">
    <property type="reaction ID" value="UER00056"/>
</dbReference>
<dbReference type="UniPathway" id="UPA00049">
    <property type="reaction ID" value="UER00060"/>
</dbReference>
<dbReference type="Proteomes" id="UP000000784">
    <property type="component" value="Chromosome"/>
</dbReference>
<dbReference type="GO" id="GO:0005829">
    <property type="term" value="C:cytosol"/>
    <property type="evidence" value="ECO:0007669"/>
    <property type="project" value="TreeGrafter"/>
</dbReference>
<dbReference type="GO" id="GO:0004455">
    <property type="term" value="F:ketol-acid reductoisomerase activity"/>
    <property type="evidence" value="ECO:0007669"/>
    <property type="project" value="UniProtKB-UniRule"/>
</dbReference>
<dbReference type="GO" id="GO:0000287">
    <property type="term" value="F:magnesium ion binding"/>
    <property type="evidence" value="ECO:0007669"/>
    <property type="project" value="UniProtKB-UniRule"/>
</dbReference>
<dbReference type="GO" id="GO:0050661">
    <property type="term" value="F:NADP binding"/>
    <property type="evidence" value="ECO:0007669"/>
    <property type="project" value="InterPro"/>
</dbReference>
<dbReference type="GO" id="GO:0009097">
    <property type="term" value="P:isoleucine biosynthetic process"/>
    <property type="evidence" value="ECO:0007669"/>
    <property type="project" value="UniProtKB-UniRule"/>
</dbReference>
<dbReference type="GO" id="GO:0009099">
    <property type="term" value="P:L-valine biosynthetic process"/>
    <property type="evidence" value="ECO:0007669"/>
    <property type="project" value="UniProtKB-UniRule"/>
</dbReference>
<dbReference type="FunFam" id="3.40.50.720:FF:000023">
    <property type="entry name" value="Ketol-acid reductoisomerase (NADP(+))"/>
    <property type="match status" value="1"/>
</dbReference>
<dbReference type="Gene3D" id="6.10.240.10">
    <property type="match status" value="1"/>
</dbReference>
<dbReference type="Gene3D" id="3.40.50.720">
    <property type="entry name" value="NAD(P)-binding Rossmann-like Domain"/>
    <property type="match status" value="1"/>
</dbReference>
<dbReference type="HAMAP" id="MF_00435">
    <property type="entry name" value="IlvC"/>
    <property type="match status" value="1"/>
</dbReference>
<dbReference type="InterPro" id="IPR008927">
    <property type="entry name" value="6-PGluconate_DH-like_C_sf"/>
</dbReference>
<dbReference type="InterPro" id="IPR013023">
    <property type="entry name" value="KARI"/>
</dbReference>
<dbReference type="InterPro" id="IPR000506">
    <property type="entry name" value="KARI_C"/>
</dbReference>
<dbReference type="InterPro" id="IPR013116">
    <property type="entry name" value="KARI_N"/>
</dbReference>
<dbReference type="InterPro" id="IPR014359">
    <property type="entry name" value="KARI_prok"/>
</dbReference>
<dbReference type="InterPro" id="IPR036291">
    <property type="entry name" value="NAD(P)-bd_dom_sf"/>
</dbReference>
<dbReference type="NCBIfam" id="TIGR00465">
    <property type="entry name" value="ilvC"/>
    <property type="match status" value="1"/>
</dbReference>
<dbReference type="NCBIfam" id="NF004017">
    <property type="entry name" value="PRK05479.1"/>
    <property type="match status" value="1"/>
</dbReference>
<dbReference type="NCBIfam" id="NF009940">
    <property type="entry name" value="PRK13403.1"/>
    <property type="match status" value="1"/>
</dbReference>
<dbReference type="PANTHER" id="PTHR21371">
    <property type="entry name" value="KETOL-ACID REDUCTOISOMERASE, MITOCHONDRIAL"/>
    <property type="match status" value="1"/>
</dbReference>
<dbReference type="PANTHER" id="PTHR21371:SF1">
    <property type="entry name" value="KETOL-ACID REDUCTOISOMERASE, MITOCHONDRIAL"/>
    <property type="match status" value="1"/>
</dbReference>
<dbReference type="Pfam" id="PF01450">
    <property type="entry name" value="KARI_C"/>
    <property type="match status" value="1"/>
</dbReference>
<dbReference type="Pfam" id="PF07991">
    <property type="entry name" value="KARI_N"/>
    <property type="match status" value="1"/>
</dbReference>
<dbReference type="PIRSF" id="PIRSF000116">
    <property type="entry name" value="IlvC_gammaproteo"/>
    <property type="match status" value="1"/>
</dbReference>
<dbReference type="SUPFAM" id="SSF48179">
    <property type="entry name" value="6-phosphogluconate dehydrogenase C-terminal domain-like"/>
    <property type="match status" value="1"/>
</dbReference>
<dbReference type="SUPFAM" id="SSF51735">
    <property type="entry name" value="NAD(P)-binding Rossmann-fold domains"/>
    <property type="match status" value="1"/>
</dbReference>
<dbReference type="PROSITE" id="PS51851">
    <property type="entry name" value="KARI_C"/>
    <property type="match status" value="1"/>
</dbReference>
<dbReference type="PROSITE" id="PS51850">
    <property type="entry name" value="KARI_N"/>
    <property type="match status" value="1"/>
</dbReference>
<protein>
    <recommendedName>
        <fullName evidence="1">Ketol-acid reductoisomerase (NADP(+))</fullName>
        <shortName evidence="1">KARI</shortName>
        <ecNumber evidence="1">1.1.1.86</ecNumber>
    </recommendedName>
    <alternativeName>
        <fullName evidence="1">Acetohydroxy-acid isomeroreductase</fullName>
        <shortName evidence="1">AHIR</shortName>
    </alternativeName>
    <alternativeName>
        <fullName evidence="1">Alpha-keto-beta-hydroxylacyl reductoisomerase</fullName>
    </alternativeName>
    <alternativeName>
        <fullName evidence="1">Ketol-acid reductoisomerase type 1</fullName>
    </alternativeName>
    <alternativeName>
        <fullName evidence="1">Ketol-acid reductoisomerase type I</fullName>
    </alternativeName>
</protein>
<keyword id="KW-0028">Amino-acid biosynthesis</keyword>
<keyword id="KW-0100">Branched-chain amino acid biosynthesis</keyword>
<keyword id="KW-0460">Magnesium</keyword>
<keyword id="KW-0479">Metal-binding</keyword>
<keyword id="KW-0521">NADP</keyword>
<keyword id="KW-0560">Oxidoreductase</keyword>
<keyword id="KW-1185">Reference proteome</keyword>
<gene>
    <name evidence="1" type="primary">ilvC</name>
    <name type="ordered locus">Daci_4865</name>
</gene>
<feature type="chain" id="PRO_1000190945" description="Ketol-acid reductoisomerase (NADP(+))">
    <location>
        <begin position="1"/>
        <end position="338"/>
    </location>
</feature>
<feature type="domain" description="KARI N-terminal Rossmann" evidence="2">
    <location>
        <begin position="1"/>
        <end position="181"/>
    </location>
</feature>
<feature type="domain" description="KARI C-terminal knotted" evidence="3">
    <location>
        <begin position="182"/>
        <end position="327"/>
    </location>
</feature>
<feature type="active site" evidence="1">
    <location>
        <position position="107"/>
    </location>
</feature>
<feature type="binding site" evidence="1">
    <location>
        <begin position="24"/>
        <end position="27"/>
    </location>
    <ligand>
        <name>NADP(+)</name>
        <dbReference type="ChEBI" id="CHEBI:58349"/>
    </ligand>
</feature>
<feature type="binding site" evidence="1">
    <location>
        <position position="47"/>
    </location>
    <ligand>
        <name>NADP(+)</name>
        <dbReference type="ChEBI" id="CHEBI:58349"/>
    </ligand>
</feature>
<feature type="binding site" evidence="1">
    <location>
        <position position="52"/>
    </location>
    <ligand>
        <name>NADP(+)</name>
        <dbReference type="ChEBI" id="CHEBI:58349"/>
    </ligand>
</feature>
<feature type="binding site" evidence="1">
    <location>
        <position position="133"/>
    </location>
    <ligand>
        <name>NADP(+)</name>
        <dbReference type="ChEBI" id="CHEBI:58349"/>
    </ligand>
</feature>
<feature type="binding site" evidence="1">
    <location>
        <position position="190"/>
    </location>
    <ligand>
        <name>Mg(2+)</name>
        <dbReference type="ChEBI" id="CHEBI:18420"/>
        <label>1</label>
    </ligand>
</feature>
<feature type="binding site" evidence="1">
    <location>
        <position position="190"/>
    </location>
    <ligand>
        <name>Mg(2+)</name>
        <dbReference type="ChEBI" id="CHEBI:18420"/>
        <label>2</label>
    </ligand>
</feature>
<feature type="binding site" evidence="1">
    <location>
        <position position="194"/>
    </location>
    <ligand>
        <name>Mg(2+)</name>
        <dbReference type="ChEBI" id="CHEBI:18420"/>
        <label>1</label>
    </ligand>
</feature>
<feature type="binding site" evidence="1">
    <location>
        <position position="226"/>
    </location>
    <ligand>
        <name>Mg(2+)</name>
        <dbReference type="ChEBI" id="CHEBI:18420"/>
        <label>2</label>
    </ligand>
</feature>
<feature type="binding site" evidence="1">
    <location>
        <position position="230"/>
    </location>
    <ligand>
        <name>Mg(2+)</name>
        <dbReference type="ChEBI" id="CHEBI:18420"/>
        <label>2</label>
    </ligand>
</feature>
<feature type="binding site" evidence="1">
    <location>
        <position position="251"/>
    </location>
    <ligand>
        <name>substrate</name>
    </ligand>
</feature>
<sequence length="338" mass="36779">MKVFYDKDCDLSLIKGKTVAIIGYGSQGHAHAQNLNESGVKVVVGLRKGGASWDKVAKAGLTVAEVDDAVKSADLVMILLPDENIPEVYNNNVAPNIKQGATLAFAHGFNIHYNQVVPRADLDVIMVAPKGPGHTVRSEYLKGGGVPSLIAVYQDKSGKARDLALSYAMANGGGKGGIIETNFKEETETDLFGEQAVLCGGAVELVKMGFETLTEAGYAPEMAYFECLHELKLIVDLMYEGGIANMNYSISNNAEYGEYVTGTEVINDKSREAMRAALKRIQTGEYAKMFIQEGRTNYPSMTARRRMNADHAIEKVGGQLRAMMPWISKNKLVDQSRN</sequence>
<proteinExistence type="inferred from homology"/>
<accession>A9BME9</accession>
<evidence type="ECO:0000255" key="1">
    <source>
        <dbReference type="HAMAP-Rule" id="MF_00435"/>
    </source>
</evidence>
<evidence type="ECO:0000255" key="2">
    <source>
        <dbReference type="PROSITE-ProRule" id="PRU01197"/>
    </source>
</evidence>
<evidence type="ECO:0000255" key="3">
    <source>
        <dbReference type="PROSITE-ProRule" id="PRU01198"/>
    </source>
</evidence>
<organism>
    <name type="scientific">Delftia acidovorans (strain DSM 14801 / SPH-1)</name>
    <dbReference type="NCBI Taxonomy" id="398578"/>
    <lineage>
        <taxon>Bacteria</taxon>
        <taxon>Pseudomonadati</taxon>
        <taxon>Pseudomonadota</taxon>
        <taxon>Betaproteobacteria</taxon>
        <taxon>Burkholderiales</taxon>
        <taxon>Comamonadaceae</taxon>
        <taxon>Delftia</taxon>
    </lineage>
</organism>
<comment type="function">
    <text evidence="1">Involved in the biosynthesis of branched-chain amino acids (BCAA). Catalyzes an alkyl-migration followed by a ketol-acid reduction of (S)-2-acetolactate (S2AL) to yield (R)-2,3-dihydroxy-isovalerate. In the isomerase reaction, S2AL is rearranged via a Mg-dependent methyl migration to produce 3-hydroxy-3-methyl-2-ketobutyrate (HMKB). In the reductase reaction, this 2-ketoacid undergoes a metal-dependent reduction by NADPH to yield (R)-2,3-dihydroxy-isovalerate.</text>
</comment>
<comment type="catalytic activity">
    <reaction evidence="1">
        <text>(2R)-2,3-dihydroxy-3-methylbutanoate + NADP(+) = (2S)-2-acetolactate + NADPH + H(+)</text>
        <dbReference type="Rhea" id="RHEA:22068"/>
        <dbReference type="ChEBI" id="CHEBI:15378"/>
        <dbReference type="ChEBI" id="CHEBI:49072"/>
        <dbReference type="ChEBI" id="CHEBI:57783"/>
        <dbReference type="ChEBI" id="CHEBI:58349"/>
        <dbReference type="ChEBI" id="CHEBI:58476"/>
        <dbReference type="EC" id="1.1.1.86"/>
    </reaction>
</comment>
<comment type="catalytic activity">
    <reaction evidence="1">
        <text>(2R,3R)-2,3-dihydroxy-3-methylpentanoate + NADP(+) = (S)-2-ethyl-2-hydroxy-3-oxobutanoate + NADPH + H(+)</text>
        <dbReference type="Rhea" id="RHEA:13493"/>
        <dbReference type="ChEBI" id="CHEBI:15378"/>
        <dbReference type="ChEBI" id="CHEBI:49256"/>
        <dbReference type="ChEBI" id="CHEBI:49258"/>
        <dbReference type="ChEBI" id="CHEBI:57783"/>
        <dbReference type="ChEBI" id="CHEBI:58349"/>
        <dbReference type="EC" id="1.1.1.86"/>
    </reaction>
</comment>
<comment type="cofactor">
    <cofactor evidence="1">
        <name>Mg(2+)</name>
        <dbReference type="ChEBI" id="CHEBI:18420"/>
    </cofactor>
    <text evidence="1">Binds 2 magnesium ions per subunit.</text>
</comment>
<comment type="pathway">
    <text evidence="1">Amino-acid biosynthesis; L-isoleucine biosynthesis; L-isoleucine from 2-oxobutanoate: step 2/4.</text>
</comment>
<comment type="pathway">
    <text evidence="1">Amino-acid biosynthesis; L-valine biosynthesis; L-valine from pyruvate: step 2/4.</text>
</comment>
<comment type="similarity">
    <text evidence="1">Belongs to the ketol-acid reductoisomerase family.</text>
</comment>
<name>ILVC_DELAS</name>